<name>FPG_CORJK</name>
<accession>Q4JUY8</accession>
<reference key="1">
    <citation type="journal article" date="2005" name="J. Bacteriol.">
        <title>Complete genome sequence and analysis of the multiresistant nosocomial pathogen Corynebacterium jeikeium K411, a lipid-requiring bacterium of the human skin flora.</title>
        <authorList>
            <person name="Tauch A."/>
            <person name="Kaiser O."/>
            <person name="Hain T."/>
            <person name="Goesmann A."/>
            <person name="Weisshaar B."/>
            <person name="Albersmeier A."/>
            <person name="Bekel T."/>
            <person name="Bischoff N."/>
            <person name="Brune I."/>
            <person name="Chakraborty T."/>
            <person name="Kalinowski J."/>
            <person name="Meyer F."/>
            <person name="Rupp O."/>
            <person name="Schneiker S."/>
            <person name="Viehoever P."/>
            <person name="Puehler A."/>
        </authorList>
    </citation>
    <scope>NUCLEOTIDE SEQUENCE [LARGE SCALE GENOMIC DNA]</scope>
    <source>
        <strain>K411</strain>
    </source>
</reference>
<organism>
    <name type="scientific">Corynebacterium jeikeium (strain K411)</name>
    <dbReference type="NCBI Taxonomy" id="306537"/>
    <lineage>
        <taxon>Bacteria</taxon>
        <taxon>Bacillati</taxon>
        <taxon>Actinomycetota</taxon>
        <taxon>Actinomycetes</taxon>
        <taxon>Mycobacteriales</taxon>
        <taxon>Corynebacteriaceae</taxon>
        <taxon>Corynebacterium</taxon>
    </lineage>
</organism>
<evidence type="ECO:0000250" key="1"/>
<evidence type="ECO:0000255" key="2">
    <source>
        <dbReference type="HAMAP-Rule" id="MF_00103"/>
    </source>
</evidence>
<dbReference type="EC" id="3.2.2.23" evidence="2"/>
<dbReference type="EC" id="4.2.99.18" evidence="2"/>
<dbReference type="EMBL" id="CR931997">
    <property type="protein sequence ID" value="CAI37369.1"/>
    <property type="molecule type" value="Genomic_DNA"/>
</dbReference>
<dbReference type="RefSeq" id="WP_011273722.1">
    <property type="nucleotide sequence ID" value="NC_007164.1"/>
</dbReference>
<dbReference type="SMR" id="Q4JUY8"/>
<dbReference type="STRING" id="306537.jk1205"/>
<dbReference type="KEGG" id="cjk:jk1205"/>
<dbReference type="PATRIC" id="fig|306537.10.peg.1219"/>
<dbReference type="eggNOG" id="COG0266">
    <property type="taxonomic scope" value="Bacteria"/>
</dbReference>
<dbReference type="HOGENOM" id="CLU_038423_1_2_11"/>
<dbReference type="OrthoDB" id="9800855at2"/>
<dbReference type="Proteomes" id="UP000000545">
    <property type="component" value="Chromosome"/>
</dbReference>
<dbReference type="GO" id="GO:0034039">
    <property type="term" value="F:8-oxo-7,8-dihydroguanine DNA N-glycosylase activity"/>
    <property type="evidence" value="ECO:0007669"/>
    <property type="project" value="TreeGrafter"/>
</dbReference>
<dbReference type="GO" id="GO:0140078">
    <property type="term" value="F:class I DNA-(apurinic or apyrimidinic site) endonuclease activity"/>
    <property type="evidence" value="ECO:0007669"/>
    <property type="project" value="UniProtKB-EC"/>
</dbReference>
<dbReference type="GO" id="GO:0003684">
    <property type="term" value="F:damaged DNA binding"/>
    <property type="evidence" value="ECO:0007669"/>
    <property type="project" value="InterPro"/>
</dbReference>
<dbReference type="GO" id="GO:0008270">
    <property type="term" value="F:zinc ion binding"/>
    <property type="evidence" value="ECO:0007669"/>
    <property type="project" value="UniProtKB-UniRule"/>
</dbReference>
<dbReference type="GO" id="GO:0006284">
    <property type="term" value="P:base-excision repair"/>
    <property type="evidence" value="ECO:0007669"/>
    <property type="project" value="InterPro"/>
</dbReference>
<dbReference type="CDD" id="cd08966">
    <property type="entry name" value="EcFpg-like_N"/>
    <property type="match status" value="1"/>
</dbReference>
<dbReference type="FunFam" id="1.10.8.50:FF:000003">
    <property type="entry name" value="Formamidopyrimidine-DNA glycosylase"/>
    <property type="match status" value="1"/>
</dbReference>
<dbReference type="Gene3D" id="1.10.8.50">
    <property type="match status" value="1"/>
</dbReference>
<dbReference type="Gene3D" id="3.20.190.10">
    <property type="entry name" value="MutM-like, N-terminal"/>
    <property type="match status" value="1"/>
</dbReference>
<dbReference type="HAMAP" id="MF_00103">
    <property type="entry name" value="Fapy_DNA_glycosyl"/>
    <property type="match status" value="1"/>
</dbReference>
<dbReference type="InterPro" id="IPR015886">
    <property type="entry name" value="DNA_glyclase/AP_lyase_DNA-bd"/>
</dbReference>
<dbReference type="InterPro" id="IPR015887">
    <property type="entry name" value="DNA_glyclase_Znf_dom_DNA_BS"/>
</dbReference>
<dbReference type="InterPro" id="IPR020629">
    <property type="entry name" value="Formamido-pyr_DNA_Glyclase"/>
</dbReference>
<dbReference type="InterPro" id="IPR012319">
    <property type="entry name" value="FPG_cat"/>
</dbReference>
<dbReference type="InterPro" id="IPR035937">
    <property type="entry name" value="MutM-like_N-ter"/>
</dbReference>
<dbReference type="InterPro" id="IPR010979">
    <property type="entry name" value="Ribosomal_uS13-like_H2TH"/>
</dbReference>
<dbReference type="InterPro" id="IPR000214">
    <property type="entry name" value="Znf_DNA_glyclase/AP_lyase"/>
</dbReference>
<dbReference type="InterPro" id="IPR010663">
    <property type="entry name" value="Znf_FPG/IleRS"/>
</dbReference>
<dbReference type="NCBIfam" id="TIGR00577">
    <property type="entry name" value="fpg"/>
    <property type="match status" value="1"/>
</dbReference>
<dbReference type="NCBIfam" id="NF002211">
    <property type="entry name" value="PRK01103.1"/>
    <property type="match status" value="1"/>
</dbReference>
<dbReference type="PANTHER" id="PTHR22993">
    <property type="entry name" value="FORMAMIDOPYRIMIDINE-DNA GLYCOSYLASE"/>
    <property type="match status" value="1"/>
</dbReference>
<dbReference type="PANTHER" id="PTHR22993:SF9">
    <property type="entry name" value="FORMAMIDOPYRIMIDINE-DNA GLYCOSYLASE"/>
    <property type="match status" value="1"/>
</dbReference>
<dbReference type="Pfam" id="PF01149">
    <property type="entry name" value="Fapy_DNA_glyco"/>
    <property type="match status" value="1"/>
</dbReference>
<dbReference type="Pfam" id="PF06831">
    <property type="entry name" value="H2TH"/>
    <property type="match status" value="1"/>
</dbReference>
<dbReference type="Pfam" id="PF06827">
    <property type="entry name" value="zf-FPG_IleRS"/>
    <property type="match status" value="1"/>
</dbReference>
<dbReference type="SMART" id="SM00898">
    <property type="entry name" value="Fapy_DNA_glyco"/>
    <property type="match status" value="1"/>
</dbReference>
<dbReference type="SMART" id="SM01232">
    <property type="entry name" value="H2TH"/>
    <property type="match status" value="1"/>
</dbReference>
<dbReference type="SUPFAM" id="SSF57716">
    <property type="entry name" value="Glucocorticoid receptor-like (DNA-binding domain)"/>
    <property type="match status" value="1"/>
</dbReference>
<dbReference type="SUPFAM" id="SSF81624">
    <property type="entry name" value="N-terminal domain of MutM-like DNA repair proteins"/>
    <property type="match status" value="1"/>
</dbReference>
<dbReference type="SUPFAM" id="SSF46946">
    <property type="entry name" value="S13-like H2TH domain"/>
    <property type="match status" value="1"/>
</dbReference>
<dbReference type="PROSITE" id="PS51068">
    <property type="entry name" value="FPG_CAT"/>
    <property type="match status" value="1"/>
</dbReference>
<dbReference type="PROSITE" id="PS01242">
    <property type="entry name" value="ZF_FPG_1"/>
    <property type="match status" value="1"/>
</dbReference>
<dbReference type="PROSITE" id="PS51066">
    <property type="entry name" value="ZF_FPG_2"/>
    <property type="match status" value="1"/>
</dbReference>
<proteinExistence type="inferred from homology"/>
<gene>
    <name evidence="2" type="primary">mutM</name>
    <name evidence="2" type="synonym">fpg</name>
    <name type="ordered locus">jk1205</name>
</gene>
<comment type="function">
    <text evidence="2">Involved in base excision repair of DNA damaged by oxidation or by mutagenic agents. Acts as a DNA glycosylase that recognizes and removes damaged bases. Has a preference for oxidized purines, such as 7,8-dihydro-8-oxoguanine (8-oxoG). Has AP (apurinic/apyrimidinic) lyase activity and introduces nicks in the DNA strand. Cleaves the DNA backbone by beta-delta elimination to generate a single-strand break at the site of the removed base with both 3'- and 5'-phosphates.</text>
</comment>
<comment type="catalytic activity">
    <reaction evidence="2">
        <text>Hydrolysis of DNA containing ring-opened 7-methylguanine residues, releasing 2,6-diamino-4-hydroxy-5-(N-methyl)formamidopyrimidine.</text>
        <dbReference type="EC" id="3.2.2.23"/>
    </reaction>
</comment>
<comment type="catalytic activity">
    <reaction evidence="2">
        <text>2'-deoxyribonucleotide-(2'-deoxyribose 5'-phosphate)-2'-deoxyribonucleotide-DNA = a 3'-end 2'-deoxyribonucleotide-(2,3-dehydro-2,3-deoxyribose 5'-phosphate)-DNA + a 5'-end 5'-phospho-2'-deoxyribonucleoside-DNA + H(+)</text>
        <dbReference type="Rhea" id="RHEA:66592"/>
        <dbReference type="Rhea" id="RHEA-COMP:13180"/>
        <dbReference type="Rhea" id="RHEA-COMP:16897"/>
        <dbReference type="Rhea" id="RHEA-COMP:17067"/>
        <dbReference type="ChEBI" id="CHEBI:15378"/>
        <dbReference type="ChEBI" id="CHEBI:136412"/>
        <dbReference type="ChEBI" id="CHEBI:157695"/>
        <dbReference type="ChEBI" id="CHEBI:167181"/>
        <dbReference type="EC" id="4.2.99.18"/>
    </reaction>
</comment>
<comment type="cofactor">
    <cofactor evidence="2">
        <name>Zn(2+)</name>
        <dbReference type="ChEBI" id="CHEBI:29105"/>
    </cofactor>
    <text evidence="2">Binds 1 zinc ion per subunit.</text>
</comment>
<comment type="subunit">
    <text evidence="2">Monomer.</text>
</comment>
<comment type="similarity">
    <text evidence="2">Belongs to the FPG family.</text>
</comment>
<feature type="initiator methionine" description="Removed" evidence="1">
    <location>
        <position position="1"/>
    </location>
</feature>
<feature type="chain" id="PRO_0000228428" description="Formamidopyrimidine-DNA glycosylase">
    <location>
        <begin position="2"/>
        <end position="288"/>
    </location>
</feature>
<feature type="zinc finger region" description="FPG-type" evidence="2">
    <location>
        <begin position="254"/>
        <end position="288"/>
    </location>
</feature>
<feature type="active site" description="Schiff-base intermediate with DNA" evidence="2">
    <location>
        <position position="2"/>
    </location>
</feature>
<feature type="active site" description="Proton donor" evidence="2">
    <location>
        <position position="3"/>
    </location>
</feature>
<feature type="active site" description="Proton donor; for beta-elimination activity" evidence="2">
    <location>
        <position position="59"/>
    </location>
</feature>
<feature type="active site" description="Proton donor; for delta-elimination activity" evidence="2">
    <location>
        <position position="278"/>
    </location>
</feature>
<feature type="binding site" evidence="2">
    <location>
        <position position="93"/>
    </location>
    <ligand>
        <name>DNA</name>
        <dbReference type="ChEBI" id="CHEBI:16991"/>
    </ligand>
</feature>
<feature type="binding site" evidence="2">
    <location>
        <position position="112"/>
    </location>
    <ligand>
        <name>DNA</name>
        <dbReference type="ChEBI" id="CHEBI:16991"/>
    </ligand>
</feature>
<feature type="binding site" evidence="2">
    <location>
        <position position="168"/>
    </location>
    <ligand>
        <name>DNA</name>
        <dbReference type="ChEBI" id="CHEBI:16991"/>
    </ligand>
</feature>
<protein>
    <recommendedName>
        <fullName evidence="2">Formamidopyrimidine-DNA glycosylase</fullName>
        <shortName evidence="2">Fapy-DNA glycosylase</shortName>
        <ecNumber evidence="2">3.2.2.23</ecNumber>
    </recommendedName>
    <alternativeName>
        <fullName evidence="2">DNA-(apurinic or apyrimidinic site) lyase MutM</fullName>
        <shortName evidence="2">AP lyase MutM</shortName>
        <ecNumber evidence="2">4.2.99.18</ecNumber>
    </alternativeName>
</protein>
<sequence>MPELPEVEVVRRGLEEHLVGRRFTDVQVCHPRAVRSGEPEVLVSSLRDATVTAVKRRGKFLWLDFGEDFLLQVHLGMSGQMLVAEPGQVQSPHVRIRAGLSDGRELCFVDQRTFGEWRLEKAVPDPWAAGAGVASPKNFLPQNVSHIAADPLEAVFDAQAAVARMKSKRAAVKTVLLNQEVVSGIGNIYADEALFLAGVRPRRSAALLSRPTLHRVLQSAAEVMECALEQGGTSFDSLYVNVNGASGYFSRSLNVYGRGGEPCKRCGAPIKRVVVGGRSTHYCATCQR</sequence>
<keyword id="KW-0227">DNA damage</keyword>
<keyword id="KW-0234">DNA repair</keyword>
<keyword id="KW-0238">DNA-binding</keyword>
<keyword id="KW-0326">Glycosidase</keyword>
<keyword id="KW-0378">Hydrolase</keyword>
<keyword id="KW-0456">Lyase</keyword>
<keyword id="KW-0479">Metal-binding</keyword>
<keyword id="KW-0511">Multifunctional enzyme</keyword>
<keyword id="KW-1185">Reference proteome</keyword>
<keyword id="KW-0862">Zinc</keyword>
<keyword id="KW-0863">Zinc-finger</keyword>